<dbReference type="EC" id="7.1.1.-"/>
<dbReference type="EMBL" id="X68301">
    <property type="protein sequence ID" value="CAA48369.1"/>
    <property type="molecule type" value="Genomic_DNA"/>
</dbReference>
<dbReference type="EMBL" id="U00096">
    <property type="protein sequence ID" value="AAC75340.1"/>
    <property type="molecule type" value="Genomic_DNA"/>
</dbReference>
<dbReference type="EMBL" id="AP009048">
    <property type="protein sequence ID" value="BAA16108.1"/>
    <property type="molecule type" value="Genomic_DNA"/>
</dbReference>
<dbReference type="PIR" id="F64999">
    <property type="entry name" value="F64999"/>
</dbReference>
<dbReference type="RefSeq" id="NP_416783.1">
    <property type="nucleotide sequence ID" value="NC_000913.3"/>
</dbReference>
<dbReference type="RefSeq" id="WP_000393511.1">
    <property type="nucleotide sequence ID" value="NZ_STEB01000008.1"/>
</dbReference>
<dbReference type="PDB" id="7NYH">
    <property type="method" value="EM"/>
    <property type="resolution" value="3.60 A"/>
    <property type="chains" value="J=1-184"/>
</dbReference>
<dbReference type="PDB" id="7NYR">
    <property type="method" value="EM"/>
    <property type="resolution" value="3.30 A"/>
    <property type="chains" value="J=1-184"/>
</dbReference>
<dbReference type="PDB" id="7NYU">
    <property type="method" value="EM"/>
    <property type="resolution" value="3.80 A"/>
    <property type="chains" value="J=1-184"/>
</dbReference>
<dbReference type="PDB" id="7NYV">
    <property type="method" value="EM"/>
    <property type="resolution" value="3.70 A"/>
    <property type="chains" value="J=1-184"/>
</dbReference>
<dbReference type="PDB" id="7P61">
    <property type="method" value="EM"/>
    <property type="resolution" value="3.20 A"/>
    <property type="chains" value="J=1-175"/>
</dbReference>
<dbReference type="PDB" id="7P62">
    <property type="method" value="EM"/>
    <property type="resolution" value="3.60 A"/>
    <property type="chains" value="J=1-175"/>
</dbReference>
<dbReference type="PDB" id="7P63">
    <property type="method" value="EM"/>
    <property type="resolution" value="3.40 A"/>
    <property type="chains" value="J=1-184"/>
</dbReference>
<dbReference type="PDB" id="7P64">
    <property type="method" value="EM"/>
    <property type="resolution" value="2.50 A"/>
    <property type="chains" value="J=1-162"/>
</dbReference>
<dbReference type="PDB" id="7P69">
    <property type="method" value="EM"/>
    <property type="resolution" value="3.00 A"/>
    <property type="chains" value="J=1-162"/>
</dbReference>
<dbReference type="PDB" id="7P7C">
    <property type="method" value="EM"/>
    <property type="resolution" value="2.40 A"/>
    <property type="chains" value="J=1-162"/>
</dbReference>
<dbReference type="PDB" id="7P7E">
    <property type="method" value="EM"/>
    <property type="resolution" value="2.70 A"/>
    <property type="chains" value="J=1-184"/>
</dbReference>
<dbReference type="PDB" id="7P7J">
    <property type="method" value="EM"/>
    <property type="resolution" value="2.70 A"/>
    <property type="chains" value="J=1-184"/>
</dbReference>
<dbReference type="PDB" id="7P7K">
    <property type="method" value="EM"/>
    <property type="resolution" value="3.10 A"/>
    <property type="chains" value="J=1-162"/>
</dbReference>
<dbReference type="PDB" id="7P7L">
    <property type="method" value="EM"/>
    <property type="resolution" value="3.00 A"/>
    <property type="chains" value="J=1-162"/>
</dbReference>
<dbReference type="PDB" id="7P7M">
    <property type="method" value="EM"/>
    <property type="resolution" value="3.20 A"/>
    <property type="chains" value="J=1-184"/>
</dbReference>
<dbReference type="PDB" id="7Z7R">
    <property type="method" value="EM"/>
    <property type="resolution" value="3.36 A"/>
    <property type="chains" value="J=1-184"/>
</dbReference>
<dbReference type="PDB" id="7Z7S">
    <property type="method" value="EM"/>
    <property type="resolution" value="2.40 A"/>
    <property type="chains" value="J=1-184"/>
</dbReference>
<dbReference type="PDB" id="7Z7T">
    <property type="method" value="EM"/>
    <property type="resolution" value="3.10 A"/>
    <property type="chains" value="J=1-184"/>
</dbReference>
<dbReference type="PDB" id="7Z7V">
    <property type="method" value="EM"/>
    <property type="resolution" value="2.29 A"/>
    <property type="chains" value="J=1-184"/>
</dbReference>
<dbReference type="PDB" id="7Z80">
    <property type="method" value="EM"/>
    <property type="resolution" value="2.93 A"/>
    <property type="chains" value="J=1-184"/>
</dbReference>
<dbReference type="PDB" id="7Z83">
    <property type="method" value="EM"/>
    <property type="resolution" value="2.88 A"/>
    <property type="chains" value="J=1-184"/>
</dbReference>
<dbReference type="PDB" id="7Z84">
    <property type="method" value="EM"/>
    <property type="resolution" value="2.87 A"/>
    <property type="chains" value="J=1-184"/>
</dbReference>
<dbReference type="PDB" id="7ZC5">
    <property type="method" value="EM"/>
    <property type="resolution" value="3.00 A"/>
    <property type="chains" value="J=1-184"/>
</dbReference>
<dbReference type="PDB" id="7ZCI">
    <property type="method" value="EM"/>
    <property type="resolution" value="2.69 A"/>
    <property type="chains" value="J=1-184"/>
</dbReference>
<dbReference type="PDBsum" id="7NYH"/>
<dbReference type="PDBsum" id="7NYR"/>
<dbReference type="PDBsum" id="7NYU"/>
<dbReference type="PDBsum" id="7NYV"/>
<dbReference type="PDBsum" id="7P61"/>
<dbReference type="PDBsum" id="7P62"/>
<dbReference type="PDBsum" id="7P63"/>
<dbReference type="PDBsum" id="7P64"/>
<dbReference type="PDBsum" id="7P69"/>
<dbReference type="PDBsum" id="7P7C"/>
<dbReference type="PDBsum" id="7P7E"/>
<dbReference type="PDBsum" id="7P7J"/>
<dbReference type="PDBsum" id="7P7K"/>
<dbReference type="PDBsum" id="7P7L"/>
<dbReference type="PDBsum" id="7P7M"/>
<dbReference type="PDBsum" id="7Z7R"/>
<dbReference type="PDBsum" id="7Z7S"/>
<dbReference type="PDBsum" id="7Z7T"/>
<dbReference type="PDBsum" id="7Z7V"/>
<dbReference type="PDBsum" id="7Z80"/>
<dbReference type="PDBsum" id="7Z83"/>
<dbReference type="PDBsum" id="7Z84"/>
<dbReference type="PDBsum" id="7ZC5"/>
<dbReference type="PDBsum" id="7ZCI"/>
<dbReference type="EMDB" id="EMD-12652"/>
<dbReference type="EMDB" id="EMD-12653"/>
<dbReference type="EMDB" id="EMD-12654"/>
<dbReference type="EMDB" id="EMD-12655"/>
<dbReference type="SMR" id="P0AFE0"/>
<dbReference type="BioGRID" id="4260509">
    <property type="interactions" value="43"/>
</dbReference>
<dbReference type="ComplexPortal" id="CPX-243">
    <property type="entry name" value="Respiratory chain complex I"/>
</dbReference>
<dbReference type="DIP" id="DIP-59258N"/>
<dbReference type="FunCoup" id="P0AFE0">
    <property type="interactions" value="436"/>
</dbReference>
<dbReference type="IntAct" id="P0AFE0">
    <property type="interactions" value="1"/>
</dbReference>
<dbReference type="STRING" id="511145.b2280"/>
<dbReference type="TCDB" id="3.D.1.1.1">
    <property type="family name" value="the h+ or na+-translocating nadh dehydrogenase (ndh) family"/>
</dbReference>
<dbReference type="jPOST" id="P0AFE0"/>
<dbReference type="PaxDb" id="511145-b2280"/>
<dbReference type="EnsemblBacteria" id="AAC75340">
    <property type="protein sequence ID" value="AAC75340"/>
    <property type="gene ID" value="b2280"/>
</dbReference>
<dbReference type="GeneID" id="93774894"/>
<dbReference type="GeneID" id="946756"/>
<dbReference type="KEGG" id="ecj:JW2275"/>
<dbReference type="KEGG" id="eco:b2280"/>
<dbReference type="KEGG" id="ecoc:C3026_12725"/>
<dbReference type="PATRIC" id="fig|1411691.4.peg.4456"/>
<dbReference type="EchoBASE" id="EB2014"/>
<dbReference type="eggNOG" id="COG0839">
    <property type="taxonomic scope" value="Bacteria"/>
</dbReference>
<dbReference type="HOGENOM" id="CLU_085957_0_1_6"/>
<dbReference type="InParanoid" id="P0AFE0"/>
<dbReference type="OMA" id="AVQFWIL"/>
<dbReference type="OrthoDB" id="9790848at2"/>
<dbReference type="PhylomeDB" id="P0AFE0"/>
<dbReference type="BioCyc" id="EcoCyc:NUOJ-MONOMER"/>
<dbReference type="BioCyc" id="MetaCyc:NUOJ-MONOMER"/>
<dbReference type="PRO" id="PR:P0AFE0"/>
<dbReference type="Proteomes" id="UP000000625">
    <property type="component" value="Chromosome"/>
</dbReference>
<dbReference type="GO" id="GO:0016020">
    <property type="term" value="C:membrane"/>
    <property type="evidence" value="ECO:0000314"/>
    <property type="project" value="ComplexPortal"/>
</dbReference>
<dbReference type="GO" id="GO:0030964">
    <property type="term" value="C:NADH dehydrogenase complex"/>
    <property type="evidence" value="ECO:0000314"/>
    <property type="project" value="EcoliWiki"/>
</dbReference>
<dbReference type="GO" id="GO:0005886">
    <property type="term" value="C:plasma membrane"/>
    <property type="evidence" value="ECO:0000314"/>
    <property type="project" value="EcoCyc"/>
</dbReference>
<dbReference type="GO" id="GO:0045271">
    <property type="term" value="C:respiratory chain complex I"/>
    <property type="evidence" value="ECO:0000314"/>
    <property type="project" value="EcoCyc"/>
</dbReference>
<dbReference type="GO" id="GO:0008137">
    <property type="term" value="F:NADH dehydrogenase (ubiquinone) activity"/>
    <property type="evidence" value="ECO:0000315"/>
    <property type="project" value="EcoCyc"/>
</dbReference>
<dbReference type="GO" id="GO:0048038">
    <property type="term" value="F:quinone binding"/>
    <property type="evidence" value="ECO:0007669"/>
    <property type="project" value="UniProtKB-KW"/>
</dbReference>
<dbReference type="GO" id="GO:0022904">
    <property type="term" value="P:respiratory electron transport chain"/>
    <property type="evidence" value="ECO:0000314"/>
    <property type="project" value="ComplexPortal"/>
</dbReference>
<dbReference type="FunFam" id="1.20.120.1200:FF:000001">
    <property type="entry name" value="NADH-quinone oxidoreductase subunit J"/>
    <property type="match status" value="1"/>
</dbReference>
<dbReference type="Gene3D" id="1.20.120.1200">
    <property type="entry name" value="NADH-ubiquinone/plastoquinone oxidoreductase chain 6, subunit NuoJ"/>
    <property type="match status" value="1"/>
</dbReference>
<dbReference type="InterPro" id="IPR001457">
    <property type="entry name" value="NADH_UbQ/plastoQ_OxRdtase_su6"/>
</dbReference>
<dbReference type="InterPro" id="IPR042106">
    <property type="entry name" value="Nuo/plastoQ_OxRdtase_6_NuoJ"/>
</dbReference>
<dbReference type="NCBIfam" id="NF005162">
    <property type="entry name" value="PRK06638.1-1"/>
    <property type="match status" value="1"/>
</dbReference>
<dbReference type="PANTHER" id="PTHR33269">
    <property type="entry name" value="NADH-UBIQUINONE OXIDOREDUCTASE CHAIN 6"/>
    <property type="match status" value="1"/>
</dbReference>
<dbReference type="PANTHER" id="PTHR33269:SF17">
    <property type="entry name" value="NADH-UBIQUINONE OXIDOREDUCTASE CHAIN 6"/>
    <property type="match status" value="1"/>
</dbReference>
<dbReference type="Pfam" id="PF00499">
    <property type="entry name" value="Oxidored_q3"/>
    <property type="match status" value="1"/>
</dbReference>
<proteinExistence type="evidence at protein level"/>
<reference key="1">
    <citation type="journal article" date="1993" name="J. Mol. Biol.">
        <title>The gene locus of the proton-translocating NADH: ubiquinone oxidoreductase in Escherichia coli. Organization of the 14 genes and relationship between the derived proteins and subunits of mitochondrial complex I.</title>
        <authorList>
            <person name="Weidner U."/>
            <person name="Geier S."/>
            <person name="Ptock A."/>
            <person name="Friedrich T."/>
            <person name="Leif H."/>
            <person name="Weiss H."/>
        </authorList>
    </citation>
    <scope>NUCLEOTIDE SEQUENCE [GENOMIC DNA]</scope>
    <source>
        <strain>K12 / AN387</strain>
    </source>
</reference>
<reference key="2">
    <citation type="journal article" date="1997" name="DNA Res.">
        <title>Construction of a contiguous 874-kb sequence of the Escherichia coli-K12 genome corresponding to 50.0-68.8 min on the linkage map and analysis of its sequence features.</title>
        <authorList>
            <person name="Yamamoto Y."/>
            <person name="Aiba H."/>
            <person name="Baba T."/>
            <person name="Hayashi K."/>
            <person name="Inada T."/>
            <person name="Isono K."/>
            <person name="Itoh T."/>
            <person name="Kimura S."/>
            <person name="Kitagawa M."/>
            <person name="Makino K."/>
            <person name="Miki T."/>
            <person name="Mitsuhashi N."/>
            <person name="Mizobuchi K."/>
            <person name="Mori H."/>
            <person name="Nakade S."/>
            <person name="Nakamura Y."/>
            <person name="Nashimoto H."/>
            <person name="Oshima T."/>
            <person name="Oyama S."/>
            <person name="Saito N."/>
            <person name="Sampei G."/>
            <person name="Satoh Y."/>
            <person name="Sivasundaram S."/>
            <person name="Tagami H."/>
            <person name="Takahashi H."/>
            <person name="Takeda J."/>
            <person name="Takemoto K."/>
            <person name="Uehara K."/>
            <person name="Wada C."/>
            <person name="Yamagata S."/>
            <person name="Horiuchi T."/>
        </authorList>
    </citation>
    <scope>NUCLEOTIDE SEQUENCE [LARGE SCALE GENOMIC DNA]</scope>
    <source>
        <strain>K12 / W3110 / ATCC 27325 / DSM 5911</strain>
    </source>
</reference>
<reference key="3">
    <citation type="journal article" date="1997" name="Science">
        <title>The complete genome sequence of Escherichia coli K-12.</title>
        <authorList>
            <person name="Blattner F.R."/>
            <person name="Plunkett G. III"/>
            <person name="Bloch C.A."/>
            <person name="Perna N.T."/>
            <person name="Burland V."/>
            <person name="Riley M."/>
            <person name="Collado-Vides J."/>
            <person name="Glasner J.D."/>
            <person name="Rode C.K."/>
            <person name="Mayhew G.F."/>
            <person name="Gregor J."/>
            <person name="Davis N.W."/>
            <person name="Kirkpatrick H.A."/>
            <person name="Goeden M.A."/>
            <person name="Rose D.J."/>
            <person name="Mau B."/>
            <person name="Shao Y."/>
        </authorList>
    </citation>
    <scope>NUCLEOTIDE SEQUENCE [LARGE SCALE GENOMIC DNA]</scope>
    <source>
        <strain>K12 / MG1655 / ATCC 47076</strain>
    </source>
</reference>
<reference key="4">
    <citation type="journal article" date="2006" name="Mol. Syst. Biol.">
        <title>Highly accurate genome sequences of Escherichia coli K-12 strains MG1655 and W3110.</title>
        <authorList>
            <person name="Hayashi K."/>
            <person name="Morooka N."/>
            <person name="Yamamoto Y."/>
            <person name="Fujita K."/>
            <person name="Isono K."/>
            <person name="Choi S."/>
            <person name="Ohtsubo E."/>
            <person name="Baba T."/>
            <person name="Wanner B.L."/>
            <person name="Mori H."/>
            <person name="Horiuchi T."/>
        </authorList>
    </citation>
    <scope>NUCLEOTIDE SEQUENCE [LARGE SCALE GENOMIC DNA]</scope>
    <source>
        <strain>K12 / W3110 / ATCC 27325 / DSM 5911</strain>
    </source>
</reference>
<reference key="5">
    <citation type="journal article" date="2005" name="Science">
        <title>Global topology analysis of the Escherichia coli inner membrane proteome.</title>
        <authorList>
            <person name="Daley D.O."/>
            <person name="Rapp M."/>
            <person name="Granseth E."/>
            <person name="Melen K."/>
            <person name="Drew D."/>
            <person name="von Heijne G."/>
        </authorList>
    </citation>
    <scope>TOPOLOGY [LARGE SCALE ANALYSIS]</scope>
    <source>
        <strain>K12 / MG1655 / ATCC 47076</strain>
    </source>
</reference>
<protein>
    <recommendedName>
        <fullName>NADH-quinone oxidoreductase subunit J</fullName>
        <ecNumber>7.1.1.-</ecNumber>
    </recommendedName>
    <alternativeName>
        <fullName>NADH dehydrogenase I subunit J</fullName>
    </alternativeName>
    <alternativeName>
        <fullName>NDH-1 subunit J</fullName>
    </alternativeName>
    <alternativeName>
        <fullName>NUO10</fullName>
    </alternativeName>
</protein>
<comment type="function">
    <text>NDH-1 shuttles electrons from NADH, via FMN and iron-sulfur (Fe-S) centers, to quinones in the respiratory chain. The immediate electron acceptor for the enzyme in this species is believed to be ubiquinone. Couples the redox reaction to proton translocation (for every two electrons transferred, four hydrogen ions are translocated across the cytoplasmic membrane), and thus conserves the redox energy in a proton gradient.</text>
</comment>
<comment type="catalytic activity">
    <reaction>
        <text>a quinone + NADH + 5 H(+)(in) = a quinol + NAD(+) + 4 H(+)(out)</text>
        <dbReference type="Rhea" id="RHEA:57888"/>
        <dbReference type="ChEBI" id="CHEBI:15378"/>
        <dbReference type="ChEBI" id="CHEBI:24646"/>
        <dbReference type="ChEBI" id="CHEBI:57540"/>
        <dbReference type="ChEBI" id="CHEBI:57945"/>
        <dbReference type="ChEBI" id="CHEBI:132124"/>
    </reaction>
</comment>
<comment type="subunit">
    <text>Composed of 13 different subunits. Subunits NuoA, H, J, K, L, M, N constitute the membrane sector of the complex.</text>
</comment>
<comment type="subcellular location">
    <subcellularLocation>
        <location>Cell inner membrane</location>
        <topology>Multi-pass membrane protein</topology>
    </subcellularLocation>
</comment>
<comment type="similarity">
    <text evidence="2">Belongs to the complex I subunit 6 family.</text>
</comment>
<evidence type="ECO:0000255" key="1"/>
<evidence type="ECO:0000305" key="2"/>
<evidence type="ECO:0007829" key="3">
    <source>
        <dbReference type="PDB" id="7P61"/>
    </source>
</evidence>
<evidence type="ECO:0007829" key="4">
    <source>
        <dbReference type="PDB" id="7Z7V"/>
    </source>
</evidence>
<feature type="chain" id="PRO_0000118370" description="NADH-quinone oxidoreductase subunit J">
    <location>
        <begin position="1"/>
        <end position="184"/>
    </location>
</feature>
<feature type="transmembrane region" description="Helical" evidence="1">
    <location>
        <begin position="1"/>
        <end position="21"/>
    </location>
</feature>
<feature type="topological domain" description="Cytoplasmic" evidence="1">
    <location>
        <begin position="22"/>
        <end position="27"/>
    </location>
</feature>
<feature type="transmembrane region" description="Helical" evidence="1">
    <location>
        <begin position="28"/>
        <end position="48"/>
    </location>
</feature>
<feature type="topological domain" description="Periplasmic" evidence="1">
    <location>
        <begin position="49"/>
        <end position="53"/>
    </location>
</feature>
<feature type="transmembrane region" description="Helical" evidence="1">
    <location>
        <begin position="54"/>
        <end position="74"/>
    </location>
</feature>
<feature type="topological domain" description="Cytoplasmic" evidence="1">
    <location>
        <begin position="75"/>
        <end position="91"/>
    </location>
</feature>
<feature type="transmembrane region" description="Helical" evidence="1">
    <location>
        <begin position="92"/>
        <end position="112"/>
    </location>
</feature>
<feature type="topological domain" description="Periplasmic" evidence="1">
    <location>
        <begin position="113"/>
        <end position="137"/>
    </location>
</feature>
<feature type="transmembrane region" description="Helical" evidence="1">
    <location>
        <begin position="138"/>
        <end position="158"/>
    </location>
</feature>
<feature type="topological domain" description="Cytoplasmic" evidence="1">
    <location>
        <begin position="159"/>
        <end position="184"/>
    </location>
</feature>
<feature type="sequence conflict" description="In Ref. 1; CAA48369." evidence="2" ref="1">
    <original>R</original>
    <variation>T</variation>
    <location>
        <position position="85"/>
    </location>
</feature>
<feature type="sequence conflict" description="In Ref. 1; CAA48369." evidence="2" ref="1">
    <original>A</original>
    <variation>R</variation>
    <location>
        <position position="126"/>
    </location>
</feature>
<feature type="helix" evidence="4">
    <location>
        <begin position="2"/>
        <end position="21"/>
    </location>
</feature>
<feature type="helix" evidence="4">
    <location>
        <begin position="25"/>
        <end position="45"/>
    </location>
</feature>
<feature type="helix" evidence="4">
    <location>
        <begin position="49"/>
        <end position="57"/>
    </location>
</feature>
<feature type="helix" evidence="4">
    <location>
        <begin position="58"/>
        <end position="62"/>
    </location>
</feature>
<feature type="helix" evidence="4">
    <location>
        <begin position="63"/>
        <end position="74"/>
    </location>
</feature>
<feature type="helix" evidence="4">
    <location>
        <begin position="80"/>
        <end position="84"/>
    </location>
</feature>
<feature type="helix" evidence="4">
    <location>
        <begin position="86"/>
        <end position="88"/>
    </location>
</feature>
<feature type="helix" evidence="4">
    <location>
        <begin position="90"/>
        <end position="111"/>
    </location>
</feature>
<feature type="helix" evidence="4">
    <location>
        <begin position="126"/>
        <end position="133"/>
    </location>
</feature>
<feature type="turn" evidence="4">
    <location>
        <begin position="134"/>
        <end position="137"/>
    </location>
</feature>
<feature type="helix" evidence="4">
    <location>
        <begin position="138"/>
        <end position="158"/>
    </location>
</feature>
<feature type="helix" evidence="3">
    <location>
        <begin position="172"/>
        <end position="174"/>
    </location>
</feature>
<name>NUOJ_ECOLI</name>
<sequence length="184" mass="19875">MEFAFYICGLIAILATLRVITHTNPVHALLYLIISLLAISGVFFSLGAYFAGALEIIVYAGAIMVLFVFVVMMLNLGGSEIEQERQWLKPQVWIGPAILSAIMLVVIVYAILGVNDQGIDGTPISAKAVGITLFGPYVLAVELASMLLLAGLVVAFHVGREERAGEVLSNRKDDSAKRKTEEHA</sequence>
<organism>
    <name type="scientific">Escherichia coli (strain K12)</name>
    <dbReference type="NCBI Taxonomy" id="83333"/>
    <lineage>
        <taxon>Bacteria</taxon>
        <taxon>Pseudomonadati</taxon>
        <taxon>Pseudomonadota</taxon>
        <taxon>Gammaproteobacteria</taxon>
        <taxon>Enterobacterales</taxon>
        <taxon>Enterobacteriaceae</taxon>
        <taxon>Escherichia</taxon>
    </lineage>
</organism>
<keyword id="KW-0002">3D-structure</keyword>
<keyword id="KW-0997">Cell inner membrane</keyword>
<keyword id="KW-1003">Cell membrane</keyword>
<keyword id="KW-0472">Membrane</keyword>
<keyword id="KW-0520">NAD</keyword>
<keyword id="KW-0874">Quinone</keyword>
<keyword id="KW-1185">Reference proteome</keyword>
<keyword id="KW-1278">Translocase</keyword>
<keyword id="KW-0812">Transmembrane</keyword>
<keyword id="KW-1133">Transmembrane helix</keyword>
<keyword id="KW-0830">Ubiquinone</keyword>
<accession>P0AFE0</accession>
<accession>P33605</accession>
<accession>P78236</accession>
<gene>
    <name type="primary">nuoJ</name>
    <name type="ordered locus">b2280</name>
    <name type="ordered locus">JW2275</name>
</gene>